<protein>
    <recommendedName>
        <fullName evidence="2">tRNA (guanine-N(7)-)-methyltransferase</fullName>
        <ecNumber evidence="2">2.1.1.33</ecNumber>
    </recommendedName>
    <alternativeName>
        <fullName evidence="2">tRNA (guanine(46)-N(7))-methyltransferase</fullName>
    </alternativeName>
    <alternativeName>
        <fullName evidence="2">tRNA(m7G46)-methyltransferase</fullName>
    </alternativeName>
</protein>
<sequence>MKPQDLKLPYFWEDRCPKIENHVFYVPSYYPKYEEFVMPSWQNLFANEGPVCCELCSGNGDWVVEQALKDTSINWIAVEKRFDRVRKIWSKMSNHKVNNLLIVCGEAQTFFTHYVTDASFQKIVVNFPDPWPKFRHRKHRLFQDVFVQDMVRVLVEGGQLTLVTDDHTYLTNSIQVMLNYLSPGMQDPYYVNVKDNYGGSWFENLWRSKGEKIFCTEFVKRVGI</sequence>
<accession>Q9PL91</accession>
<gene>
    <name evidence="2" type="primary">trmB</name>
    <name type="ordered locus">TC_0216</name>
</gene>
<reference key="1">
    <citation type="journal article" date="2000" name="Nucleic Acids Res.">
        <title>Genome sequences of Chlamydia trachomatis MoPn and Chlamydia pneumoniae AR39.</title>
        <authorList>
            <person name="Read T.D."/>
            <person name="Brunham R.C."/>
            <person name="Shen C."/>
            <person name="Gill S.R."/>
            <person name="Heidelberg J.F."/>
            <person name="White O."/>
            <person name="Hickey E.K."/>
            <person name="Peterson J.D."/>
            <person name="Utterback T.R."/>
            <person name="Berry K.J."/>
            <person name="Bass S."/>
            <person name="Linher K.D."/>
            <person name="Weidman J.F."/>
            <person name="Khouri H.M."/>
            <person name="Craven B."/>
            <person name="Bowman C."/>
            <person name="Dodson R.J."/>
            <person name="Gwinn M.L."/>
            <person name="Nelson W.C."/>
            <person name="DeBoy R.T."/>
            <person name="Kolonay J.F."/>
            <person name="McClarty G."/>
            <person name="Salzberg S.L."/>
            <person name="Eisen J.A."/>
            <person name="Fraser C.M."/>
        </authorList>
    </citation>
    <scope>NUCLEOTIDE SEQUENCE [LARGE SCALE GENOMIC DNA]</scope>
    <source>
        <strain>MoPn / Nigg</strain>
    </source>
</reference>
<comment type="function">
    <text evidence="2">Catalyzes the formation of N(7)-methylguanine at position 46 (m7G46) in tRNA.</text>
</comment>
<comment type="catalytic activity">
    <reaction evidence="2">
        <text>guanosine(46) in tRNA + S-adenosyl-L-methionine = N(7)-methylguanosine(46) in tRNA + S-adenosyl-L-homocysteine</text>
        <dbReference type="Rhea" id="RHEA:42708"/>
        <dbReference type="Rhea" id="RHEA-COMP:10188"/>
        <dbReference type="Rhea" id="RHEA-COMP:10189"/>
        <dbReference type="ChEBI" id="CHEBI:57856"/>
        <dbReference type="ChEBI" id="CHEBI:59789"/>
        <dbReference type="ChEBI" id="CHEBI:74269"/>
        <dbReference type="ChEBI" id="CHEBI:74480"/>
        <dbReference type="EC" id="2.1.1.33"/>
    </reaction>
</comment>
<comment type="pathway">
    <text evidence="2">tRNA modification; N(7)-methylguanine-tRNA biosynthesis.</text>
</comment>
<comment type="similarity">
    <text evidence="2">Belongs to the class I-like SAM-binding methyltransferase superfamily. TrmB family.</text>
</comment>
<dbReference type="EC" id="2.1.1.33" evidence="2"/>
<dbReference type="EMBL" id="AE002160">
    <property type="protein sequence ID" value="AAF39088.1"/>
    <property type="molecule type" value="Genomic_DNA"/>
</dbReference>
<dbReference type="PIR" id="F81726">
    <property type="entry name" value="F81726"/>
</dbReference>
<dbReference type="SMR" id="Q9PL91"/>
<dbReference type="KEGG" id="cmu:TC_0216"/>
<dbReference type="eggNOG" id="COG0220">
    <property type="taxonomic scope" value="Bacteria"/>
</dbReference>
<dbReference type="HOGENOM" id="CLU_050910_2_0_0"/>
<dbReference type="OrthoDB" id="9802090at2"/>
<dbReference type="UniPathway" id="UPA00989"/>
<dbReference type="Proteomes" id="UP000000800">
    <property type="component" value="Chromosome"/>
</dbReference>
<dbReference type="GO" id="GO:0043527">
    <property type="term" value="C:tRNA methyltransferase complex"/>
    <property type="evidence" value="ECO:0007669"/>
    <property type="project" value="TreeGrafter"/>
</dbReference>
<dbReference type="GO" id="GO:0008176">
    <property type="term" value="F:tRNA (guanine(46)-N7)-methyltransferase activity"/>
    <property type="evidence" value="ECO:0007669"/>
    <property type="project" value="UniProtKB-UniRule"/>
</dbReference>
<dbReference type="Gene3D" id="3.40.50.150">
    <property type="entry name" value="Vaccinia Virus protein VP39"/>
    <property type="match status" value="1"/>
</dbReference>
<dbReference type="HAMAP" id="MF_01057">
    <property type="entry name" value="tRNA_methyltr_TrmB"/>
    <property type="match status" value="1"/>
</dbReference>
<dbReference type="InterPro" id="IPR029063">
    <property type="entry name" value="SAM-dependent_MTases_sf"/>
</dbReference>
<dbReference type="InterPro" id="IPR003358">
    <property type="entry name" value="tRNA_(Gua-N-7)_MeTrfase_Trmb"/>
</dbReference>
<dbReference type="InterPro" id="IPR055361">
    <property type="entry name" value="tRNA_methyltr_TrmB_bact"/>
</dbReference>
<dbReference type="PANTHER" id="PTHR23417">
    <property type="entry name" value="3-DEOXY-D-MANNO-OCTULOSONIC-ACID TRANSFERASE/TRNA GUANINE-N 7 - -METHYLTRANSFERASE"/>
    <property type="match status" value="1"/>
</dbReference>
<dbReference type="PANTHER" id="PTHR23417:SF14">
    <property type="entry name" value="PENTACOTRIPEPTIDE-REPEAT REGION OF PRORP DOMAIN-CONTAINING PROTEIN"/>
    <property type="match status" value="1"/>
</dbReference>
<dbReference type="Pfam" id="PF02390">
    <property type="entry name" value="Methyltransf_4"/>
    <property type="match status" value="1"/>
</dbReference>
<dbReference type="SUPFAM" id="SSF53335">
    <property type="entry name" value="S-adenosyl-L-methionine-dependent methyltransferases"/>
    <property type="match status" value="1"/>
</dbReference>
<dbReference type="PROSITE" id="PS51625">
    <property type="entry name" value="SAM_MT_TRMB"/>
    <property type="match status" value="1"/>
</dbReference>
<feature type="chain" id="PRO_0000171315" description="tRNA (guanine-N(7)-)-methyltransferase">
    <location>
        <begin position="1"/>
        <end position="224"/>
    </location>
</feature>
<feature type="active site" evidence="1">
    <location>
        <position position="129"/>
    </location>
</feature>
<feature type="binding site" evidence="2">
    <location>
        <position position="54"/>
    </location>
    <ligand>
        <name>S-adenosyl-L-methionine</name>
        <dbReference type="ChEBI" id="CHEBI:59789"/>
    </ligand>
</feature>
<feature type="binding site" evidence="2">
    <location>
        <position position="79"/>
    </location>
    <ligand>
        <name>S-adenosyl-L-methionine</name>
        <dbReference type="ChEBI" id="CHEBI:59789"/>
    </ligand>
</feature>
<feature type="binding site" evidence="2">
    <location>
        <position position="106"/>
    </location>
    <ligand>
        <name>S-adenosyl-L-methionine</name>
        <dbReference type="ChEBI" id="CHEBI:59789"/>
    </ligand>
</feature>
<feature type="binding site" evidence="2">
    <location>
        <position position="129"/>
    </location>
    <ligand>
        <name>S-adenosyl-L-methionine</name>
        <dbReference type="ChEBI" id="CHEBI:59789"/>
    </ligand>
</feature>
<feature type="binding site" evidence="2">
    <location>
        <position position="133"/>
    </location>
    <ligand>
        <name>substrate</name>
    </ligand>
</feature>
<feature type="binding site" evidence="2">
    <location>
        <position position="165"/>
    </location>
    <ligand>
        <name>substrate</name>
    </ligand>
</feature>
<proteinExistence type="inferred from homology"/>
<organism>
    <name type="scientific">Chlamydia muridarum (strain MoPn / Nigg)</name>
    <dbReference type="NCBI Taxonomy" id="243161"/>
    <lineage>
        <taxon>Bacteria</taxon>
        <taxon>Pseudomonadati</taxon>
        <taxon>Chlamydiota</taxon>
        <taxon>Chlamydiia</taxon>
        <taxon>Chlamydiales</taxon>
        <taxon>Chlamydiaceae</taxon>
        <taxon>Chlamydia/Chlamydophila group</taxon>
        <taxon>Chlamydia</taxon>
    </lineage>
</organism>
<name>TRMB_CHLMU</name>
<keyword id="KW-0489">Methyltransferase</keyword>
<keyword id="KW-0949">S-adenosyl-L-methionine</keyword>
<keyword id="KW-0808">Transferase</keyword>
<keyword id="KW-0819">tRNA processing</keyword>
<evidence type="ECO:0000250" key="1"/>
<evidence type="ECO:0000255" key="2">
    <source>
        <dbReference type="HAMAP-Rule" id="MF_01057"/>
    </source>
</evidence>